<gene>
    <name evidence="1" type="primary">fmt</name>
    <name type="ordered locus">Smlt4177</name>
</gene>
<comment type="function">
    <text evidence="1">Attaches a formyl group to the free amino group of methionyl-tRNA(fMet). The formyl group appears to play a dual role in the initiator identity of N-formylmethionyl-tRNA by promoting its recognition by IF2 and preventing the misappropriation of this tRNA by the elongation apparatus.</text>
</comment>
<comment type="catalytic activity">
    <reaction evidence="1">
        <text>L-methionyl-tRNA(fMet) + (6R)-10-formyltetrahydrofolate = N-formyl-L-methionyl-tRNA(fMet) + (6S)-5,6,7,8-tetrahydrofolate + H(+)</text>
        <dbReference type="Rhea" id="RHEA:24380"/>
        <dbReference type="Rhea" id="RHEA-COMP:9952"/>
        <dbReference type="Rhea" id="RHEA-COMP:9953"/>
        <dbReference type="ChEBI" id="CHEBI:15378"/>
        <dbReference type="ChEBI" id="CHEBI:57453"/>
        <dbReference type="ChEBI" id="CHEBI:78530"/>
        <dbReference type="ChEBI" id="CHEBI:78844"/>
        <dbReference type="ChEBI" id="CHEBI:195366"/>
        <dbReference type="EC" id="2.1.2.9"/>
    </reaction>
</comment>
<comment type="similarity">
    <text evidence="1">Belongs to the Fmt family.</text>
</comment>
<organism>
    <name type="scientific">Stenotrophomonas maltophilia (strain K279a)</name>
    <dbReference type="NCBI Taxonomy" id="522373"/>
    <lineage>
        <taxon>Bacteria</taxon>
        <taxon>Pseudomonadati</taxon>
        <taxon>Pseudomonadota</taxon>
        <taxon>Gammaproteobacteria</taxon>
        <taxon>Lysobacterales</taxon>
        <taxon>Lysobacteraceae</taxon>
        <taxon>Stenotrophomonas</taxon>
        <taxon>Stenotrophomonas maltophilia group</taxon>
    </lineage>
</organism>
<reference key="1">
    <citation type="journal article" date="2008" name="Genome Biol.">
        <title>The complete genome, comparative and functional analysis of Stenotrophomonas maltophilia reveals an organism heavily shielded by drug resistance determinants.</title>
        <authorList>
            <person name="Crossman L.C."/>
            <person name="Gould V.C."/>
            <person name="Dow J.M."/>
            <person name="Vernikos G.S."/>
            <person name="Okazaki A."/>
            <person name="Sebaihia M."/>
            <person name="Saunders D."/>
            <person name="Arrowsmith C."/>
            <person name="Carver T."/>
            <person name="Peters N."/>
            <person name="Adlem E."/>
            <person name="Kerhornou A."/>
            <person name="Lord A."/>
            <person name="Murphy L."/>
            <person name="Seeger K."/>
            <person name="Squares R."/>
            <person name="Rutter S."/>
            <person name="Quail M.A."/>
            <person name="Rajandream M.A."/>
            <person name="Harris D."/>
            <person name="Churcher C."/>
            <person name="Bentley S.D."/>
            <person name="Parkhill J."/>
            <person name="Thomson N.R."/>
            <person name="Avison M.B."/>
        </authorList>
    </citation>
    <scope>NUCLEOTIDE SEQUENCE [LARGE SCALE GENOMIC DNA]</scope>
    <source>
        <strain>K279a</strain>
    </source>
</reference>
<evidence type="ECO:0000255" key="1">
    <source>
        <dbReference type="HAMAP-Rule" id="MF_00182"/>
    </source>
</evidence>
<protein>
    <recommendedName>
        <fullName evidence="1">Methionyl-tRNA formyltransferase</fullName>
        <ecNumber evidence="1">2.1.2.9</ecNumber>
    </recommendedName>
</protein>
<accession>B2FIR3</accession>
<proteinExistence type="inferred from homology"/>
<dbReference type="EC" id="2.1.2.9" evidence="1"/>
<dbReference type="EMBL" id="AM743169">
    <property type="protein sequence ID" value="CAQ47568.1"/>
    <property type="molecule type" value="Genomic_DNA"/>
</dbReference>
<dbReference type="RefSeq" id="WP_012481367.1">
    <property type="nucleotide sequence ID" value="NC_010943.1"/>
</dbReference>
<dbReference type="SMR" id="B2FIR3"/>
<dbReference type="EnsemblBacteria" id="CAQ47568">
    <property type="protein sequence ID" value="CAQ47568"/>
    <property type="gene ID" value="Smlt4177"/>
</dbReference>
<dbReference type="KEGG" id="sml:Smlt4177"/>
<dbReference type="PATRIC" id="fig|522373.3.peg.3947"/>
<dbReference type="eggNOG" id="COG0223">
    <property type="taxonomic scope" value="Bacteria"/>
</dbReference>
<dbReference type="HOGENOM" id="CLU_033347_1_2_6"/>
<dbReference type="Proteomes" id="UP000008840">
    <property type="component" value="Chromosome"/>
</dbReference>
<dbReference type="GO" id="GO:0005829">
    <property type="term" value="C:cytosol"/>
    <property type="evidence" value="ECO:0007669"/>
    <property type="project" value="TreeGrafter"/>
</dbReference>
<dbReference type="GO" id="GO:0004479">
    <property type="term" value="F:methionyl-tRNA formyltransferase activity"/>
    <property type="evidence" value="ECO:0007669"/>
    <property type="project" value="UniProtKB-UniRule"/>
</dbReference>
<dbReference type="CDD" id="cd08646">
    <property type="entry name" value="FMT_core_Met-tRNA-FMT_N"/>
    <property type="match status" value="1"/>
</dbReference>
<dbReference type="CDD" id="cd08704">
    <property type="entry name" value="Met_tRNA_FMT_C"/>
    <property type="match status" value="1"/>
</dbReference>
<dbReference type="FunFam" id="3.40.50.170:FF:000003">
    <property type="entry name" value="Methionyl-tRNA formyltransferase"/>
    <property type="match status" value="1"/>
</dbReference>
<dbReference type="Gene3D" id="3.10.25.10">
    <property type="entry name" value="Formyl transferase, C-terminal domain"/>
    <property type="match status" value="1"/>
</dbReference>
<dbReference type="Gene3D" id="3.40.50.170">
    <property type="entry name" value="Formyl transferase, N-terminal domain"/>
    <property type="match status" value="1"/>
</dbReference>
<dbReference type="HAMAP" id="MF_00182">
    <property type="entry name" value="Formyl_trans"/>
    <property type="match status" value="1"/>
</dbReference>
<dbReference type="InterPro" id="IPR005794">
    <property type="entry name" value="Fmt"/>
</dbReference>
<dbReference type="InterPro" id="IPR005793">
    <property type="entry name" value="Formyl_trans_C"/>
</dbReference>
<dbReference type="InterPro" id="IPR037022">
    <property type="entry name" value="Formyl_trans_C_sf"/>
</dbReference>
<dbReference type="InterPro" id="IPR002376">
    <property type="entry name" value="Formyl_transf_N"/>
</dbReference>
<dbReference type="InterPro" id="IPR036477">
    <property type="entry name" value="Formyl_transf_N_sf"/>
</dbReference>
<dbReference type="InterPro" id="IPR011034">
    <property type="entry name" value="Formyl_transferase-like_C_sf"/>
</dbReference>
<dbReference type="InterPro" id="IPR001555">
    <property type="entry name" value="GART_AS"/>
</dbReference>
<dbReference type="InterPro" id="IPR044135">
    <property type="entry name" value="Met-tRNA-FMT_C"/>
</dbReference>
<dbReference type="InterPro" id="IPR041711">
    <property type="entry name" value="Met-tRNA-FMT_N"/>
</dbReference>
<dbReference type="NCBIfam" id="TIGR00460">
    <property type="entry name" value="fmt"/>
    <property type="match status" value="1"/>
</dbReference>
<dbReference type="PANTHER" id="PTHR11138">
    <property type="entry name" value="METHIONYL-TRNA FORMYLTRANSFERASE"/>
    <property type="match status" value="1"/>
</dbReference>
<dbReference type="PANTHER" id="PTHR11138:SF5">
    <property type="entry name" value="METHIONYL-TRNA FORMYLTRANSFERASE, MITOCHONDRIAL"/>
    <property type="match status" value="1"/>
</dbReference>
<dbReference type="Pfam" id="PF02911">
    <property type="entry name" value="Formyl_trans_C"/>
    <property type="match status" value="1"/>
</dbReference>
<dbReference type="Pfam" id="PF00551">
    <property type="entry name" value="Formyl_trans_N"/>
    <property type="match status" value="1"/>
</dbReference>
<dbReference type="SUPFAM" id="SSF50486">
    <property type="entry name" value="FMT C-terminal domain-like"/>
    <property type="match status" value="1"/>
</dbReference>
<dbReference type="SUPFAM" id="SSF53328">
    <property type="entry name" value="Formyltransferase"/>
    <property type="match status" value="1"/>
</dbReference>
<dbReference type="PROSITE" id="PS00373">
    <property type="entry name" value="GART"/>
    <property type="match status" value="1"/>
</dbReference>
<feature type="chain" id="PRO_1000098447" description="Methionyl-tRNA formyltransferase">
    <location>
        <begin position="1"/>
        <end position="307"/>
    </location>
</feature>
<feature type="binding site" evidence="1">
    <location>
        <begin position="108"/>
        <end position="111"/>
    </location>
    <ligand>
        <name>(6S)-5,6,7,8-tetrahydrofolate</name>
        <dbReference type="ChEBI" id="CHEBI:57453"/>
    </ligand>
</feature>
<keyword id="KW-0648">Protein biosynthesis</keyword>
<keyword id="KW-1185">Reference proteome</keyword>
<keyword id="KW-0808">Transferase</keyword>
<sequence length="307" mass="32543">MRIVFAGTPEFAVSSLRAAARHHEVVAVYTQPDRPAGRGRGLAPSPVKLEAVARGIPVYQPESLKDAAAQQQLRDLQPDLMVVVAYGLILPKAVLAIPTHGCWNVHASLLPRWRGAAPIQRAIQAGDAKTGVCLMQMEAGLDTGPVLLHQELPIASTDTGGQLHDKLAELGAQVLSDGLGLLRAGIKPIARPQPEQGVTYAHKLDKAEARLDWAQDADALARTVRAFNPWPIAEATLAGERVRIHGAVALEADHGQAPGTVLAAGRDGIDIACGQGALRLRVLQREGGKAITAADYLNARRDLRVGA</sequence>
<name>FMT_STRMK</name>